<protein>
    <recommendedName>
        <fullName evidence="1">Protein TIC 214</fullName>
    </recommendedName>
    <alternativeName>
        <fullName evidence="1">Translocon at the inner envelope membrane of chloroplasts 214</fullName>
        <shortName evidence="1">AtTIC214</shortName>
    </alternativeName>
</protein>
<dbReference type="EMBL" id="DQ119058">
    <property type="protein sequence ID" value="AAZ94706.1"/>
    <property type="molecule type" value="Genomic_DNA"/>
</dbReference>
<dbReference type="EMBL" id="AJ970307">
    <property type="protein sequence ID" value="CAJ00805.1"/>
    <property type="status" value="ALT_INIT"/>
    <property type="molecule type" value="Genomic_DNA"/>
</dbReference>
<dbReference type="EMBL" id="AJ970307">
    <property type="protein sequence ID" value="CAJ00817.1"/>
    <property type="molecule type" value="Genomic_DNA"/>
</dbReference>
<dbReference type="EMBL" id="DQ865975">
    <property type="protein sequence ID" value="ABI97471.1"/>
    <property type="molecule type" value="Genomic_DNA"/>
</dbReference>
<dbReference type="EMBL" id="DQ865976">
    <property type="protein sequence ID" value="ABI98801.1"/>
    <property type="molecule type" value="Genomic_DNA"/>
</dbReference>
<dbReference type="SMR" id="Q4VZL0"/>
<dbReference type="KEGG" id="csv:3429264"/>
<dbReference type="KEGG" id="csv:3429356"/>
<dbReference type="eggNOG" id="ENOG502QSDY">
    <property type="taxonomic scope" value="Eukaryota"/>
</dbReference>
<dbReference type="OrthoDB" id="1938219at2759"/>
<dbReference type="GO" id="GO:0009706">
    <property type="term" value="C:chloroplast inner membrane"/>
    <property type="evidence" value="ECO:0007669"/>
    <property type="project" value="UniProtKB-SubCell"/>
</dbReference>
<dbReference type="GO" id="GO:0015031">
    <property type="term" value="P:protein transport"/>
    <property type="evidence" value="ECO:0007669"/>
    <property type="project" value="UniProtKB-KW"/>
</dbReference>
<dbReference type="InterPro" id="IPR008896">
    <property type="entry name" value="TIC214"/>
</dbReference>
<dbReference type="PANTHER" id="PTHR33163:SF40">
    <property type="entry name" value="PROTEIN TIC 214"/>
    <property type="match status" value="1"/>
</dbReference>
<dbReference type="PANTHER" id="PTHR33163">
    <property type="entry name" value="PROTEIN TIC 214-RELATED"/>
    <property type="match status" value="1"/>
</dbReference>
<dbReference type="Pfam" id="PF05758">
    <property type="entry name" value="Ycf1"/>
    <property type="match status" value="4"/>
</dbReference>
<reference key="1">
    <citation type="journal article" date="2006" name="Plant Cell Rep.">
        <title>Complete sequence and organization of the cucumber (Cucumis sativus L. cv. Baekmibaekdadagi) chloroplast genome.</title>
        <authorList>
            <person name="Kim J.-S."/>
            <person name="Jung J.D."/>
            <person name="Lee J.-A."/>
            <person name="Park H.-W."/>
            <person name="Oh K.-H."/>
            <person name="Jeong W.J."/>
            <person name="Choi D.-W."/>
            <person name="Liu J.R."/>
            <person name="Cho K.Y."/>
        </authorList>
    </citation>
    <scope>NUCLEOTIDE SEQUENCE [LARGE SCALE GENOMIC DNA]</scope>
    <source>
        <strain>cv. Baekmibaekdadagi</strain>
    </source>
</reference>
<reference key="2">
    <citation type="journal article" date="2007" name="Cell. Mol. Biol. Lett.">
        <title>The complete structure of the cucumber (Cucumis sativus L.) chloroplast genome: its composition and comparative analysis.</title>
        <authorList>
            <person name="Plader W.W."/>
            <person name="Yukawa Y."/>
            <person name="Sugiura M."/>
            <person name="Malepszy S."/>
        </authorList>
    </citation>
    <scope>NUCLEOTIDE SEQUENCE [LARGE SCALE GENOMIC DNA]</scope>
    <source>
        <strain>cv. Borszczagowski</strain>
    </source>
</reference>
<reference key="3">
    <citation type="journal article" date="2007" name="Genome">
        <title>Sequencing cucumber (Cucumis sativus L.) chloroplast genomes identifies differences between chilling-tolerant and -susceptible cucumber lines.</title>
        <authorList>
            <person name="Chung S.-M."/>
            <person name="Gordon V.S."/>
            <person name="Staub J.E."/>
        </authorList>
    </citation>
    <scope>NUCLEOTIDE SEQUENCE [LARGE SCALE GENOMIC DNA]</scope>
    <scope>VARIANTS</scope>
    <source>
        <strain>cv. Chipper</strain>
        <strain>cv. Gy14</strain>
    </source>
</reference>
<proteinExistence type="inferred from homology"/>
<sequence>MILKSFILGNLVSLCMKIINSVVVVGLYYGFLTTFSIGPSYLFLLRAWLMEEGTEKKVSATTGFITGQLMMFISIYYAPLHLALGRPYTITVLALPYLLFHFFWTNPKHFFYYGSTTRNSMRNLSIQCVFLNNLIFQLFNHFILPSSMLVRLVNISMFRCNNKMLFVTSSFVGWLIGHILFMKSVGLILVWIQQNNSIISKKYIRSNKYLVSELRNSIAPIFSIILFITWVYYLGRIPSPIPLKETSKTSETAETEESEEETDVEIETTSETKGTKQEQEGSTEEDTSPSLFSEEKEDPDKIDETEEIRIDKKEKYLFGFEKPLGIILFDYKRWNRPFRYIKNDKFDNAVRKEMSQYFFYTCQSDGKDRIVFTYPPSVATFFELIEKKISLFSTEKLFYDEFDNPWKSLNEQKKRILNKIVITRILLLDKGSPTLVGDVLQKRTQLCICNDETKKEYLPKIYDPFLSGPYRRRINLLLGFSMLNETSRKNDSENIWTNKIHAIIRNNNNGFFDGVTIPYKANASDQNSIDLTEISKKVPRWSYKLIKEIEQVYDITDGELVLDYQIRSRKCKRVVILSDLNKIKKISTSTPTSTPTSTPTSTSTPTSTPTSTPTSTPTSTSTSTPASIPASTSTSIPASTSTSTSTSIPASTSTSTSIPASTSTSIPASTSTSTSTSTSIPASTSTSTNEIKSKDEPKDEPMEQAIIRYAKQWDFRREIIKGSMRAQRRKMGIYQLFQGANSYLFLDRHNFFFSDFCIYIPRLMEKLDRLRIRTNTELPISNNGEEKTREDLKNEKNQESINLKEEKHIQIAELWESIRFGQLVRGSLLITQAFLRKYIILPSVIIAANLTRILLLSPPHFFEDFKNWKKEIYVKCTYNAIPLAENEFPQNWLTDGIQIKILFPFRLQSWHRSKKIEKKDFCFLTVFGTETEQPFGSAENPFLFFKSDLIELREFIKKKKQQLKKWRTKYFRIFLRLRKKVFRKINIAKEKWVIKPILFIKKRIREFWQRNPILLLQLKEIYKLTEAKKENNSIISNGMIQSSSGSIDSIILSLRERKMKELTDRINTMLKIIEKMKKDRQKELLNTKINISPNKMSYYDKIFESQKNILKILKKRNVRFIRKSYKFLKFFVQNIYIDIFQGIINMSRINGQDSKITKSFFNNEANQERIDKPNQSIIISTIKKLLSNITNKNVKNQNLKMFWDVSYLSQAYLFYKLSQTKIINLSKLRPVFQYHGTSRFLKNEIQDYFVEVVGAHEILHSDLKQKKQKNLENSGMINPWKNWLRGHYNFDLYPIRWSKLLSQKWRNRVKQDRKNKDFNQCDSYEKKGLIDYKKQNPFETHYSLPTKKKKKYIYDSLSYKSINYEDNKDSYIYELPVQVKNNQESCYKYNKDKCKFFDILTDLPIDKYLVKNNYLVKANIRDLEKTMDRKYFDWRMLHFSIKNKGDIRVWRHNESDTNSKKNTQNGVKNFELIQKINKKIIKKIKKKELFYLTINQDKKSNPSNNKKQIFFDWMRMSEKKISRYRSNSNPKWFFPKFLILYNAYKIKPWMIPIKSLLFDLNENEIFSKKKLIEKKNGNKAKKESVAKEGVDSVLSNHTKNLQKDSAGADVKKGIKKKQSKKKIEGKLGVLRTGHFRFQLNWPNPEISKSLFMNLNGFSFMLRRLDLKKLSLAAIRNNEFSLEFLLPPSDDITFHELLEKGIFIIEPVRLSLKNDGKFIMSQTIGISLVQKNKYQLNQRYQEKGYPYKRSFAESIAIHQKRTENRTSNHYDLLVPENILSPRGRREFRILICFNSGNKNDIHRNTAFDDGNKVKTDDQVLDKRSKHLDRYQNQLKNLKLFLWPNYRLEDLACMNRYWFDTNNSSRFSMLRIHMYPQLKIR</sequence>
<feature type="chain" id="PRO_0000262605" description="Protein TIC 214">
    <location>
        <begin position="1"/>
        <end position="1879"/>
    </location>
</feature>
<feature type="transmembrane region" description="Helical" evidence="2">
    <location>
        <begin position="18"/>
        <end position="38"/>
    </location>
</feature>
<feature type="transmembrane region" description="Helical" evidence="2">
    <location>
        <begin position="64"/>
        <end position="84"/>
    </location>
</feature>
<feature type="transmembrane region" description="Helical" evidence="2">
    <location>
        <begin position="87"/>
        <end position="107"/>
    </location>
</feature>
<feature type="transmembrane region" description="Helical" evidence="2">
    <location>
        <begin position="124"/>
        <end position="144"/>
    </location>
</feature>
<feature type="transmembrane region" description="Helical" evidence="2">
    <location>
        <begin position="172"/>
        <end position="192"/>
    </location>
</feature>
<feature type="transmembrane region" description="Helical" evidence="2">
    <location>
        <begin position="218"/>
        <end position="238"/>
    </location>
</feature>
<feature type="region of interest" description="Disordered" evidence="3">
    <location>
        <begin position="245"/>
        <end position="305"/>
    </location>
</feature>
<feature type="region of interest" description="Disordered" evidence="3">
    <location>
        <begin position="586"/>
        <end position="702"/>
    </location>
</feature>
<feature type="compositionally biased region" description="Acidic residues" evidence="3">
    <location>
        <begin position="253"/>
        <end position="268"/>
    </location>
</feature>
<feature type="compositionally biased region" description="Acidic residues" evidence="3">
    <location>
        <begin position="295"/>
        <end position="305"/>
    </location>
</feature>
<feature type="compositionally biased region" description="Low complexity" evidence="3">
    <location>
        <begin position="586"/>
        <end position="688"/>
    </location>
</feature>
<feature type="compositionally biased region" description="Basic and acidic residues" evidence="3">
    <location>
        <begin position="691"/>
        <end position="701"/>
    </location>
</feature>
<feature type="sequence variant" description="In strain: cv. Baekmibaekdadagi.">
    <original>YIY</original>
    <variation>FFF</variation>
    <location>
        <begin position="1352"/>
        <end position="1354"/>
    </location>
</feature>
<feature type="sequence variant" description="In strain: cv. Baekmibaekdadagi.">
    <original>YI</original>
    <variation>FF</variation>
    <location>
        <begin position="1371"/>
        <end position="1372"/>
    </location>
</feature>
<feature type="sequence variant" description="In strain: cv. Baekmibaekdadagi.">
    <original>E</original>
    <variation>K</variation>
    <location>
        <position position="1384"/>
    </location>
</feature>
<feature type="sequence variant" description="In strain: cv. Baekmibaekdadagi.">
    <original>YKY</original>
    <variation>FKS</variation>
    <location>
        <begin position="1387"/>
        <end position="1389"/>
    </location>
</feature>
<feature type="sequence variant" description="In strain: cv. Baekmibaekdadagi.">
    <original>R</original>
    <variation>K</variation>
    <location>
        <position position="1421"/>
    </location>
</feature>
<feature type="sequence variant" description="In strain: cv. Baekmibaekdadagi.">
    <original>R</original>
    <variation>K</variation>
    <location>
        <position position="1435"/>
    </location>
</feature>
<feature type="sequence variant" description="In strain: cv. Baekmibaekdadagi.">
    <original>R</original>
    <variation>Q</variation>
    <location>
        <position position="1448"/>
    </location>
</feature>
<feature type="sequence variant" description="In strain: cv. Baekmibaekdadagi.">
    <original>R</original>
    <variation>K</variation>
    <location>
        <position position="1451"/>
    </location>
</feature>
<feature type="sequence conflict" description="In Ref. 2; CAJ00805." evidence="4" ref="2">
    <original>T</original>
    <variation>I</variation>
    <location>
        <position position="116"/>
    </location>
</feature>
<feature type="sequence conflict" description="In Ref. 2; CAJ00805." evidence="4" ref="2">
    <original>R</original>
    <variation>S</variation>
    <location>
        <position position="205"/>
    </location>
</feature>
<feature type="sequence conflict" description="In Ref. 2; CAJ00805." evidence="4" ref="2">
    <original>F</original>
    <variation>L</variation>
    <location>
        <position position="222"/>
    </location>
</feature>
<feature type="sequence conflict" description="In Ref. 2; CAJ00817." evidence="4" ref="2">
    <original>S</original>
    <variation>F</variation>
    <location>
        <position position="657"/>
    </location>
</feature>
<feature type="sequence conflict" description="In Ref. 2; CAJ00817." evidence="4" ref="2">
    <original>I</original>
    <variation>M</variation>
    <location>
        <position position="733"/>
    </location>
</feature>
<feature type="sequence conflict" description="In Ref. 2; CAJ00817." evidence="4" ref="2">
    <original>D</original>
    <variation>G</variation>
    <location>
        <position position="747"/>
    </location>
</feature>
<feature type="sequence conflict" description="In Ref. 2; CAJ00817." evidence="4" ref="2">
    <original>I</original>
    <variation>L</variation>
    <location>
        <position position="1004"/>
    </location>
</feature>
<feature type="sequence conflict" description="In Ref. 2; CAJ00817." evidence="4" ref="2">
    <original>I</original>
    <variation>T</variation>
    <location>
        <position position="1245"/>
    </location>
</feature>
<feature type="sequence conflict" description="In Ref. 2; CAJ00817." evidence="4" ref="2">
    <original>L</original>
    <variation>P</variation>
    <location>
        <position position="1415"/>
    </location>
</feature>
<feature type="sequence conflict" description="In Ref. 2; CAJ00817." evidence="4" ref="2">
    <original>D</original>
    <variation>G</variation>
    <location>
        <position position="1422"/>
    </location>
</feature>
<feature type="sequence conflict" description="In Ref. 2; CAJ00817." evidence="4" ref="2">
    <original>K</original>
    <variation>R</variation>
    <location>
        <position position="1482"/>
    </location>
</feature>
<feature type="sequence conflict" description="In Ref. 2; CAJ00817." evidence="4" ref="2">
    <original>D</original>
    <variation>N</variation>
    <location>
        <position position="1848"/>
    </location>
</feature>
<gene>
    <name evidence="1" type="primary">TIC214</name>
    <name type="synonym">ycf1-A</name>
    <name type="ordered locus">CsCp100</name>
</gene>
<gene>
    <name evidence="1" type="primary">TIC214</name>
    <name type="synonym">ycf1-B</name>
    <name type="ordered locus">CsCp113</name>
</gene>
<organism>
    <name type="scientific">Cucumis sativus</name>
    <name type="common">Cucumber</name>
    <dbReference type="NCBI Taxonomy" id="3659"/>
    <lineage>
        <taxon>Eukaryota</taxon>
        <taxon>Viridiplantae</taxon>
        <taxon>Streptophyta</taxon>
        <taxon>Embryophyta</taxon>
        <taxon>Tracheophyta</taxon>
        <taxon>Spermatophyta</taxon>
        <taxon>Magnoliopsida</taxon>
        <taxon>eudicotyledons</taxon>
        <taxon>Gunneridae</taxon>
        <taxon>Pentapetalae</taxon>
        <taxon>rosids</taxon>
        <taxon>fabids</taxon>
        <taxon>Cucurbitales</taxon>
        <taxon>Cucurbitaceae</taxon>
        <taxon>Benincaseae</taxon>
        <taxon>Cucumis</taxon>
    </lineage>
</organism>
<keyword id="KW-0150">Chloroplast</keyword>
<keyword id="KW-0472">Membrane</keyword>
<keyword id="KW-0934">Plastid</keyword>
<keyword id="KW-1001">Plastid inner membrane</keyword>
<keyword id="KW-0653">Protein transport</keyword>
<keyword id="KW-0812">Transmembrane</keyword>
<keyword id="KW-1133">Transmembrane helix</keyword>
<keyword id="KW-0813">Transport</keyword>
<accession>Q4VZL0</accession>
<accession>A5J1Z1</accession>
<accession>Q2QD33</accession>
<accession>Q4VZM2</accession>
<evidence type="ECO:0000250" key="1">
    <source>
        <dbReference type="UniProtKB" id="P56785"/>
    </source>
</evidence>
<evidence type="ECO:0000255" key="2"/>
<evidence type="ECO:0000256" key="3">
    <source>
        <dbReference type="SAM" id="MobiDB-lite"/>
    </source>
</evidence>
<evidence type="ECO:0000305" key="4"/>
<geneLocation type="chloroplast"/>
<name>TI214_CUCSA</name>
<comment type="function">
    <text evidence="1">Involved in protein precursor import into chloroplasts. May be part of an intermediate translocation complex acting as a protein-conducting channel at the inner envelope.</text>
</comment>
<comment type="subunit">
    <text evidence="1">Part of the Tic complex.</text>
</comment>
<comment type="subcellular location">
    <subcellularLocation>
        <location evidence="1">Plastid</location>
        <location evidence="1">Chloroplast inner membrane</location>
        <topology evidence="2">Multi-pass membrane protein</topology>
    </subcellularLocation>
</comment>
<comment type="miscellaneous">
    <text>There is a partial copy of the N-terminus (positions 1-222) of ycf1 in the inverted repeat (CsCp100, ycf1-A, CAJ00805).</text>
</comment>
<comment type="miscellaneous">
    <text>Sequence shown corresponds to cv. Gy14/Chipper.</text>
</comment>
<comment type="similarity">
    <text evidence="4">Belongs to the TIC214 family.</text>
</comment>
<comment type="sequence caution" evidence="4">
    <conflict type="erroneous initiation">
        <sequence resource="EMBL-CDS" id="CAJ00805"/>
    </conflict>
</comment>